<evidence type="ECO:0000255" key="1">
    <source>
        <dbReference type="HAMAP-Rule" id="MF_00518"/>
    </source>
</evidence>
<gene>
    <name evidence="1" type="primary">dtd</name>
    <name type="ordered locus">SACOL1688</name>
</gene>
<sequence length="150" mass="16697">MKVVVQRVKEASVTNDTLNNQIKKGYCLLVGIGQNSTEQDADVIAKKIANARLFEDDNNKLNFNIQQMNGEILSVSQFTLYADVKKGNRPGFSNSKNPDQAVKIYEYFNDALRAYGLTVKTGEFGTHMNVSINNDGPVTIIYESQDGKIQ</sequence>
<keyword id="KW-0963">Cytoplasm</keyword>
<keyword id="KW-0378">Hydrolase</keyword>
<keyword id="KW-0694">RNA-binding</keyword>
<keyword id="KW-0820">tRNA-binding</keyword>
<name>DTD_STAAC</name>
<comment type="function">
    <text evidence="1">An aminoacyl-tRNA editing enzyme that deacylates mischarged D-aminoacyl-tRNAs. Also deacylates mischarged glycyl-tRNA(Ala), protecting cells against glycine mischarging by AlaRS. Acts via tRNA-based rather than protein-based catalysis; rejects L-amino acids rather than detecting D-amino acids in the active site. By recycling D-aminoacyl-tRNA to D-amino acids and free tRNA molecules, this enzyme counteracts the toxicity associated with the formation of D-aminoacyl-tRNA entities in vivo and helps enforce protein L-homochirality.</text>
</comment>
<comment type="catalytic activity">
    <reaction evidence="1">
        <text>glycyl-tRNA(Ala) + H2O = tRNA(Ala) + glycine + H(+)</text>
        <dbReference type="Rhea" id="RHEA:53744"/>
        <dbReference type="Rhea" id="RHEA-COMP:9657"/>
        <dbReference type="Rhea" id="RHEA-COMP:13640"/>
        <dbReference type="ChEBI" id="CHEBI:15377"/>
        <dbReference type="ChEBI" id="CHEBI:15378"/>
        <dbReference type="ChEBI" id="CHEBI:57305"/>
        <dbReference type="ChEBI" id="CHEBI:78442"/>
        <dbReference type="ChEBI" id="CHEBI:78522"/>
        <dbReference type="EC" id="3.1.1.96"/>
    </reaction>
</comment>
<comment type="catalytic activity">
    <reaction evidence="1">
        <text>a D-aminoacyl-tRNA + H2O = a tRNA + a D-alpha-amino acid + H(+)</text>
        <dbReference type="Rhea" id="RHEA:13953"/>
        <dbReference type="Rhea" id="RHEA-COMP:10123"/>
        <dbReference type="Rhea" id="RHEA-COMP:10124"/>
        <dbReference type="ChEBI" id="CHEBI:15377"/>
        <dbReference type="ChEBI" id="CHEBI:15378"/>
        <dbReference type="ChEBI" id="CHEBI:59871"/>
        <dbReference type="ChEBI" id="CHEBI:78442"/>
        <dbReference type="ChEBI" id="CHEBI:79333"/>
        <dbReference type="EC" id="3.1.1.96"/>
    </reaction>
</comment>
<comment type="subunit">
    <text evidence="1">Homodimer.</text>
</comment>
<comment type="subcellular location">
    <subcellularLocation>
        <location evidence="1">Cytoplasm</location>
    </subcellularLocation>
</comment>
<comment type="domain">
    <text evidence="1">A Gly-cisPro motif from one monomer fits into the active site of the other monomer to allow specific chiral rejection of L-amino acids.</text>
</comment>
<comment type="similarity">
    <text evidence="1">Belongs to the DTD family.</text>
</comment>
<proteinExistence type="inferred from homology"/>
<feature type="chain" id="PRO_0000164586" description="D-aminoacyl-tRNA deacylase">
    <location>
        <begin position="1"/>
        <end position="150"/>
    </location>
</feature>
<feature type="short sequence motif" description="Gly-cisPro motif, important for rejection of L-amino acids" evidence="1">
    <location>
        <begin position="136"/>
        <end position="137"/>
    </location>
</feature>
<reference key="1">
    <citation type="journal article" date="2005" name="J. Bacteriol.">
        <title>Insights on evolution of virulence and resistance from the complete genome analysis of an early methicillin-resistant Staphylococcus aureus strain and a biofilm-producing methicillin-resistant Staphylococcus epidermidis strain.</title>
        <authorList>
            <person name="Gill S.R."/>
            <person name="Fouts D.E."/>
            <person name="Archer G.L."/>
            <person name="Mongodin E.F."/>
            <person name="DeBoy R.T."/>
            <person name="Ravel J."/>
            <person name="Paulsen I.T."/>
            <person name="Kolonay J.F."/>
            <person name="Brinkac L.M."/>
            <person name="Beanan M.J."/>
            <person name="Dodson R.J."/>
            <person name="Daugherty S.C."/>
            <person name="Madupu R."/>
            <person name="Angiuoli S.V."/>
            <person name="Durkin A.S."/>
            <person name="Haft D.H."/>
            <person name="Vamathevan J.J."/>
            <person name="Khouri H."/>
            <person name="Utterback T.R."/>
            <person name="Lee C."/>
            <person name="Dimitrov G."/>
            <person name="Jiang L."/>
            <person name="Qin H."/>
            <person name="Weidman J."/>
            <person name="Tran K."/>
            <person name="Kang K.H."/>
            <person name="Hance I.R."/>
            <person name="Nelson K.E."/>
            <person name="Fraser C.M."/>
        </authorList>
    </citation>
    <scope>NUCLEOTIDE SEQUENCE [LARGE SCALE GENOMIC DNA]</scope>
    <source>
        <strain>COL</strain>
    </source>
</reference>
<dbReference type="EC" id="3.1.1.96" evidence="1"/>
<dbReference type="EMBL" id="CP000046">
    <property type="protein sequence ID" value="AAW36794.1"/>
    <property type="molecule type" value="Genomic_DNA"/>
</dbReference>
<dbReference type="RefSeq" id="WP_000869983.1">
    <property type="nucleotide sequence ID" value="NZ_JBGOFO010000003.1"/>
</dbReference>
<dbReference type="SMR" id="Q5HFD0"/>
<dbReference type="KEGG" id="sac:SACOL1688"/>
<dbReference type="HOGENOM" id="CLU_076901_1_0_9"/>
<dbReference type="Proteomes" id="UP000000530">
    <property type="component" value="Chromosome"/>
</dbReference>
<dbReference type="GO" id="GO:0005737">
    <property type="term" value="C:cytoplasm"/>
    <property type="evidence" value="ECO:0007669"/>
    <property type="project" value="UniProtKB-SubCell"/>
</dbReference>
<dbReference type="GO" id="GO:0051500">
    <property type="term" value="F:D-tyrosyl-tRNA(Tyr) deacylase activity"/>
    <property type="evidence" value="ECO:0007669"/>
    <property type="project" value="TreeGrafter"/>
</dbReference>
<dbReference type="GO" id="GO:0106026">
    <property type="term" value="F:Gly-tRNA(Ala) deacylase activity"/>
    <property type="evidence" value="ECO:0007669"/>
    <property type="project" value="UniProtKB-UniRule"/>
</dbReference>
<dbReference type="GO" id="GO:0043908">
    <property type="term" value="F:Ser(Gly)-tRNA(Ala) hydrolase activity"/>
    <property type="evidence" value="ECO:0007669"/>
    <property type="project" value="UniProtKB-UniRule"/>
</dbReference>
<dbReference type="GO" id="GO:0000049">
    <property type="term" value="F:tRNA binding"/>
    <property type="evidence" value="ECO:0007669"/>
    <property type="project" value="UniProtKB-UniRule"/>
</dbReference>
<dbReference type="GO" id="GO:0019478">
    <property type="term" value="P:D-amino acid catabolic process"/>
    <property type="evidence" value="ECO:0007669"/>
    <property type="project" value="UniProtKB-UniRule"/>
</dbReference>
<dbReference type="FunFam" id="3.50.80.10:FF:000005">
    <property type="entry name" value="D-aminoacyl-tRNA deacylase"/>
    <property type="match status" value="1"/>
</dbReference>
<dbReference type="Gene3D" id="3.50.80.10">
    <property type="entry name" value="D-tyrosyl-tRNA(Tyr) deacylase"/>
    <property type="match status" value="1"/>
</dbReference>
<dbReference type="HAMAP" id="MF_00518">
    <property type="entry name" value="Deacylase_Dtd"/>
    <property type="match status" value="1"/>
</dbReference>
<dbReference type="InterPro" id="IPR003732">
    <property type="entry name" value="Daa-tRNA_deacyls_DTD"/>
</dbReference>
<dbReference type="InterPro" id="IPR023509">
    <property type="entry name" value="DTD-like_sf"/>
</dbReference>
<dbReference type="NCBIfam" id="TIGR00256">
    <property type="entry name" value="D-aminoacyl-tRNA deacylase"/>
    <property type="match status" value="1"/>
</dbReference>
<dbReference type="PANTHER" id="PTHR10472:SF5">
    <property type="entry name" value="D-AMINOACYL-TRNA DEACYLASE 1"/>
    <property type="match status" value="1"/>
</dbReference>
<dbReference type="PANTHER" id="PTHR10472">
    <property type="entry name" value="D-TYROSYL-TRNA TYR DEACYLASE"/>
    <property type="match status" value="1"/>
</dbReference>
<dbReference type="Pfam" id="PF02580">
    <property type="entry name" value="Tyr_Deacylase"/>
    <property type="match status" value="1"/>
</dbReference>
<dbReference type="SUPFAM" id="SSF69500">
    <property type="entry name" value="DTD-like"/>
    <property type="match status" value="1"/>
</dbReference>
<accession>Q5HFD0</accession>
<protein>
    <recommendedName>
        <fullName evidence="1">D-aminoacyl-tRNA deacylase</fullName>
        <shortName evidence="1">DTD</shortName>
        <ecNumber evidence="1">3.1.1.96</ecNumber>
    </recommendedName>
    <alternativeName>
        <fullName evidence="1">Gly-tRNA(Ala) deacylase</fullName>
    </alternativeName>
</protein>
<organism>
    <name type="scientific">Staphylococcus aureus (strain COL)</name>
    <dbReference type="NCBI Taxonomy" id="93062"/>
    <lineage>
        <taxon>Bacteria</taxon>
        <taxon>Bacillati</taxon>
        <taxon>Bacillota</taxon>
        <taxon>Bacilli</taxon>
        <taxon>Bacillales</taxon>
        <taxon>Staphylococcaceae</taxon>
        <taxon>Staphylococcus</taxon>
    </lineage>
</organism>